<feature type="chain" id="PRO_1000040411" description="6,7-dimethyl-8-ribityllumazine synthase">
    <location>
        <begin position="1"/>
        <end position="160"/>
    </location>
</feature>
<feature type="active site" description="Proton donor" evidence="1">
    <location>
        <position position="89"/>
    </location>
</feature>
<feature type="binding site" evidence="1">
    <location>
        <position position="28"/>
    </location>
    <ligand>
        <name>5-amino-6-(D-ribitylamino)uracil</name>
        <dbReference type="ChEBI" id="CHEBI:15934"/>
    </ligand>
</feature>
<feature type="binding site" evidence="1">
    <location>
        <begin position="59"/>
        <end position="61"/>
    </location>
    <ligand>
        <name>5-amino-6-(D-ribitylamino)uracil</name>
        <dbReference type="ChEBI" id="CHEBI:15934"/>
    </ligand>
</feature>
<feature type="binding site" evidence="1">
    <location>
        <begin position="81"/>
        <end position="83"/>
    </location>
    <ligand>
        <name>5-amino-6-(D-ribitylamino)uracil</name>
        <dbReference type="ChEBI" id="CHEBI:15934"/>
    </ligand>
</feature>
<feature type="binding site" evidence="1">
    <location>
        <begin position="86"/>
        <end position="87"/>
    </location>
    <ligand>
        <name>(2S)-2-hydroxy-3-oxobutyl phosphate</name>
        <dbReference type="ChEBI" id="CHEBI:58830"/>
    </ligand>
</feature>
<feature type="binding site" evidence="1">
    <location>
        <position position="114"/>
    </location>
    <ligand>
        <name>5-amino-6-(D-ribitylamino)uracil</name>
        <dbReference type="ChEBI" id="CHEBI:15934"/>
    </ligand>
</feature>
<feature type="binding site" evidence="1">
    <location>
        <position position="128"/>
    </location>
    <ligand>
        <name>(2S)-2-hydroxy-3-oxobutyl phosphate</name>
        <dbReference type="ChEBI" id="CHEBI:58830"/>
    </ligand>
</feature>
<evidence type="ECO:0000255" key="1">
    <source>
        <dbReference type="HAMAP-Rule" id="MF_00178"/>
    </source>
</evidence>
<protein>
    <recommendedName>
        <fullName evidence="1">6,7-dimethyl-8-ribityllumazine synthase</fullName>
        <shortName evidence="1">DMRL synthase</shortName>
        <shortName evidence="1">LS</shortName>
        <shortName evidence="1">Lumazine synthase</shortName>
        <ecNumber evidence="1">2.5.1.78</ecNumber>
    </recommendedName>
</protein>
<dbReference type="EC" id="2.5.1.78" evidence="1"/>
<dbReference type="EMBL" id="CR931997">
    <property type="protein sequence ID" value="CAI37171.1"/>
    <property type="molecule type" value="Genomic_DNA"/>
</dbReference>
<dbReference type="SMR" id="Q4JVI6"/>
<dbReference type="STRING" id="306537.jk1007"/>
<dbReference type="KEGG" id="cjk:jk1007"/>
<dbReference type="PATRIC" id="fig|306537.10.peg.1019"/>
<dbReference type="eggNOG" id="COG0054">
    <property type="taxonomic scope" value="Bacteria"/>
</dbReference>
<dbReference type="HOGENOM" id="CLU_089358_1_2_11"/>
<dbReference type="OrthoDB" id="9809709at2"/>
<dbReference type="UniPathway" id="UPA00275">
    <property type="reaction ID" value="UER00404"/>
</dbReference>
<dbReference type="Proteomes" id="UP000000545">
    <property type="component" value="Chromosome"/>
</dbReference>
<dbReference type="GO" id="GO:0005829">
    <property type="term" value="C:cytosol"/>
    <property type="evidence" value="ECO:0007669"/>
    <property type="project" value="TreeGrafter"/>
</dbReference>
<dbReference type="GO" id="GO:0009349">
    <property type="term" value="C:riboflavin synthase complex"/>
    <property type="evidence" value="ECO:0007669"/>
    <property type="project" value="InterPro"/>
</dbReference>
<dbReference type="GO" id="GO:0000906">
    <property type="term" value="F:6,7-dimethyl-8-ribityllumazine synthase activity"/>
    <property type="evidence" value="ECO:0007669"/>
    <property type="project" value="UniProtKB-UniRule"/>
</dbReference>
<dbReference type="GO" id="GO:0009231">
    <property type="term" value="P:riboflavin biosynthetic process"/>
    <property type="evidence" value="ECO:0007669"/>
    <property type="project" value="UniProtKB-UniRule"/>
</dbReference>
<dbReference type="CDD" id="cd09209">
    <property type="entry name" value="Lumazine_synthase-I"/>
    <property type="match status" value="1"/>
</dbReference>
<dbReference type="Gene3D" id="3.40.50.960">
    <property type="entry name" value="Lumazine/riboflavin synthase"/>
    <property type="match status" value="1"/>
</dbReference>
<dbReference type="HAMAP" id="MF_00178">
    <property type="entry name" value="Lumazine_synth"/>
    <property type="match status" value="1"/>
</dbReference>
<dbReference type="InterPro" id="IPR034964">
    <property type="entry name" value="LS"/>
</dbReference>
<dbReference type="InterPro" id="IPR002180">
    <property type="entry name" value="LS/RS"/>
</dbReference>
<dbReference type="InterPro" id="IPR036467">
    <property type="entry name" value="LS/RS_sf"/>
</dbReference>
<dbReference type="NCBIfam" id="TIGR00114">
    <property type="entry name" value="lumazine-synth"/>
    <property type="match status" value="1"/>
</dbReference>
<dbReference type="PANTHER" id="PTHR21058:SF0">
    <property type="entry name" value="6,7-DIMETHYL-8-RIBITYLLUMAZINE SYNTHASE"/>
    <property type="match status" value="1"/>
</dbReference>
<dbReference type="PANTHER" id="PTHR21058">
    <property type="entry name" value="6,7-DIMETHYL-8-RIBITYLLUMAZINE SYNTHASE DMRL SYNTHASE LUMAZINE SYNTHASE"/>
    <property type="match status" value="1"/>
</dbReference>
<dbReference type="Pfam" id="PF00885">
    <property type="entry name" value="DMRL_synthase"/>
    <property type="match status" value="1"/>
</dbReference>
<dbReference type="SUPFAM" id="SSF52121">
    <property type="entry name" value="Lumazine synthase"/>
    <property type="match status" value="1"/>
</dbReference>
<sequence length="160" mass="16518">MAHNGVADVQLKAGSAYGMTVAVISASWNADITDQLHEHSIAAAKEAGAQVSEWRVAGALELPVAVAAACKRFDAVVANGCVIQGETEHFRVVCDAVTYGLTRAGMDSGTPVGNGVLTVDTHEQAVDRAGGVDAKEDKGRDAAVAAIHTALVLRQIERGV</sequence>
<comment type="function">
    <text evidence="1">Catalyzes the formation of 6,7-dimethyl-8-ribityllumazine by condensation of 5-amino-6-(D-ribitylamino)uracil with 3,4-dihydroxy-2-butanone 4-phosphate. This is the penultimate step in the biosynthesis of riboflavin.</text>
</comment>
<comment type="catalytic activity">
    <reaction evidence="1">
        <text>(2S)-2-hydroxy-3-oxobutyl phosphate + 5-amino-6-(D-ribitylamino)uracil = 6,7-dimethyl-8-(1-D-ribityl)lumazine + phosphate + 2 H2O + H(+)</text>
        <dbReference type="Rhea" id="RHEA:26152"/>
        <dbReference type="ChEBI" id="CHEBI:15377"/>
        <dbReference type="ChEBI" id="CHEBI:15378"/>
        <dbReference type="ChEBI" id="CHEBI:15934"/>
        <dbReference type="ChEBI" id="CHEBI:43474"/>
        <dbReference type="ChEBI" id="CHEBI:58201"/>
        <dbReference type="ChEBI" id="CHEBI:58830"/>
        <dbReference type="EC" id="2.5.1.78"/>
    </reaction>
</comment>
<comment type="pathway">
    <text evidence="1">Cofactor biosynthesis; riboflavin biosynthesis; riboflavin from 2-hydroxy-3-oxobutyl phosphate and 5-amino-6-(D-ribitylamino)uracil: step 1/2.</text>
</comment>
<comment type="similarity">
    <text evidence="1">Belongs to the DMRL synthase family.</text>
</comment>
<keyword id="KW-1185">Reference proteome</keyword>
<keyword id="KW-0686">Riboflavin biosynthesis</keyword>
<keyword id="KW-0808">Transferase</keyword>
<name>RISB_CORJK</name>
<organism>
    <name type="scientific">Corynebacterium jeikeium (strain K411)</name>
    <dbReference type="NCBI Taxonomy" id="306537"/>
    <lineage>
        <taxon>Bacteria</taxon>
        <taxon>Bacillati</taxon>
        <taxon>Actinomycetota</taxon>
        <taxon>Actinomycetes</taxon>
        <taxon>Mycobacteriales</taxon>
        <taxon>Corynebacteriaceae</taxon>
        <taxon>Corynebacterium</taxon>
    </lineage>
</organism>
<accession>Q4JVI6</accession>
<proteinExistence type="inferred from homology"/>
<reference key="1">
    <citation type="journal article" date="2005" name="J. Bacteriol.">
        <title>Complete genome sequence and analysis of the multiresistant nosocomial pathogen Corynebacterium jeikeium K411, a lipid-requiring bacterium of the human skin flora.</title>
        <authorList>
            <person name="Tauch A."/>
            <person name="Kaiser O."/>
            <person name="Hain T."/>
            <person name="Goesmann A."/>
            <person name="Weisshaar B."/>
            <person name="Albersmeier A."/>
            <person name="Bekel T."/>
            <person name="Bischoff N."/>
            <person name="Brune I."/>
            <person name="Chakraborty T."/>
            <person name="Kalinowski J."/>
            <person name="Meyer F."/>
            <person name="Rupp O."/>
            <person name="Schneiker S."/>
            <person name="Viehoever P."/>
            <person name="Puehler A."/>
        </authorList>
    </citation>
    <scope>NUCLEOTIDE SEQUENCE [LARGE SCALE GENOMIC DNA]</scope>
    <source>
        <strain>K411</strain>
    </source>
</reference>
<gene>
    <name evidence="1" type="primary">ribH</name>
    <name type="ordered locus">jk1007</name>
</gene>